<name>VE1_HPV13</name>
<protein>
    <recommendedName>
        <fullName evidence="1">Replication protein E1</fullName>
        <ecNumber evidence="1">5.6.2.4</ecNumber>
    </recommendedName>
    <alternativeName>
        <fullName evidence="1">ATP-dependent helicase E1</fullName>
    </alternativeName>
    <alternativeName>
        <fullName evidence="1">DNA 3'-5' helicase E1</fullName>
    </alternativeName>
</protein>
<dbReference type="EC" id="5.6.2.4" evidence="1"/>
<dbReference type="EMBL" id="X62843">
    <property type="protein sequence ID" value="CAA44649.1"/>
    <property type="molecule type" value="Genomic_DNA"/>
</dbReference>
<dbReference type="PIR" id="C42955">
    <property type="entry name" value="W1WL13"/>
</dbReference>
<dbReference type="SMR" id="Q02261"/>
<dbReference type="Proteomes" id="UP000009107">
    <property type="component" value="Genome"/>
</dbReference>
<dbReference type="GO" id="GO:0042025">
    <property type="term" value="C:host cell nucleus"/>
    <property type="evidence" value="ECO:0007669"/>
    <property type="project" value="UniProtKB-SubCell"/>
</dbReference>
<dbReference type="GO" id="GO:0005524">
    <property type="term" value="F:ATP binding"/>
    <property type="evidence" value="ECO:0007669"/>
    <property type="project" value="UniProtKB-UniRule"/>
</dbReference>
<dbReference type="GO" id="GO:0016887">
    <property type="term" value="F:ATP hydrolysis activity"/>
    <property type="evidence" value="ECO:0007669"/>
    <property type="project" value="RHEA"/>
</dbReference>
<dbReference type="GO" id="GO:0003677">
    <property type="term" value="F:DNA binding"/>
    <property type="evidence" value="ECO:0007669"/>
    <property type="project" value="UniProtKB-UniRule"/>
</dbReference>
<dbReference type="GO" id="GO:0003678">
    <property type="term" value="F:DNA helicase activity"/>
    <property type="evidence" value="ECO:0007669"/>
    <property type="project" value="UniProtKB-UniRule"/>
</dbReference>
<dbReference type="GO" id="GO:0006260">
    <property type="term" value="P:DNA replication"/>
    <property type="evidence" value="ECO:0007669"/>
    <property type="project" value="UniProtKB-UniRule"/>
</dbReference>
<dbReference type="FunFam" id="1.10.10.510:FF:000001">
    <property type="entry name" value="Replication protein E1"/>
    <property type="match status" value="1"/>
</dbReference>
<dbReference type="Gene3D" id="3.40.1310.10">
    <property type="match status" value="1"/>
</dbReference>
<dbReference type="Gene3D" id="3.40.50.300">
    <property type="entry name" value="P-loop containing nucleotide triphosphate hydrolases"/>
    <property type="match status" value="1"/>
</dbReference>
<dbReference type="Gene3D" id="1.10.10.510">
    <property type="entry name" value="Zinc finger, large T-antigen D1 domain"/>
    <property type="match status" value="1"/>
</dbReference>
<dbReference type="HAMAP" id="MF_04000">
    <property type="entry name" value="PPV_E1"/>
    <property type="match status" value="1"/>
</dbReference>
<dbReference type="InterPro" id="IPR014015">
    <property type="entry name" value="Helicase_SF3_DNA-vir"/>
</dbReference>
<dbReference type="InterPro" id="IPR027417">
    <property type="entry name" value="P-loop_NTPase"/>
</dbReference>
<dbReference type="InterPro" id="IPR001177">
    <property type="entry name" value="PPV_DNA_helicase_E1_C"/>
</dbReference>
<dbReference type="InterPro" id="IPR014000">
    <property type="entry name" value="PPV_DNA_helicase_E1_N"/>
</dbReference>
<dbReference type="InterPro" id="IPR046832">
    <property type="entry name" value="PPV_E1_DBD"/>
</dbReference>
<dbReference type="InterPro" id="IPR046935">
    <property type="entry name" value="PPV_E1_DBD_sf"/>
</dbReference>
<dbReference type="InterPro" id="IPR016393">
    <property type="entry name" value="Rep_E1_papillomaV"/>
</dbReference>
<dbReference type="InterPro" id="IPR037102">
    <property type="entry name" value="Znf_lg_T-Ag_D1_dom_sf"/>
</dbReference>
<dbReference type="Pfam" id="PF00519">
    <property type="entry name" value="PPV_E1_C"/>
    <property type="match status" value="1"/>
</dbReference>
<dbReference type="Pfam" id="PF20450">
    <property type="entry name" value="PPV_E1_DBD"/>
    <property type="match status" value="1"/>
</dbReference>
<dbReference type="Pfam" id="PF00524">
    <property type="entry name" value="PPV_E1_N"/>
    <property type="match status" value="1"/>
</dbReference>
<dbReference type="PIRSF" id="PIRSF003383">
    <property type="entry name" value="Rep_E1_papillomaV"/>
    <property type="match status" value="1"/>
</dbReference>
<dbReference type="SUPFAM" id="SSF55464">
    <property type="entry name" value="Origin of replication-binding domain, RBD-like"/>
    <property type="match status" value="1"/>
</dbReference>
<dbReference type="SUPFAM" id="SSF52540">
    <property type="entry name" value="P-loop containing nucleoside triphosphate hydrolases"/>
    <property type="match status" value="1"/>
</dbReference>
<dbReference type="PROSITE" id="PS51206">
    <property type="entry name" value="SF3_HELICASE_1"/>
    <property type="match status" value="1"/>
</dbReference>
<keyword id="KW-0067">ATP-binding</keyword>
<keyword id="KW-0235">DNA replication</keyword>
<keyword id="KW-0238">DNA-binding</keyword>
<keyword id="KW-0244">Early protein</keyword>
<keyword id="KW-0347">Helicase</keyword>
<keyword id="KW-1048">Host nucleus</keyword>
<keyword id="KW-0378">Hydrolase</keyword>
<keyword id="KW-0413">Isomerase</keyword>
<keyword id="KW-1017">Isopeptide bond</keyword>
<keyword id="KW-0547">Nucleotide-binding</keyword>
<keyword id="KW-0597">Phosphoprotein</keyword>
<keyword id="KW-0832">Ubl conjugation</keyword>
<organismHost>
    <name type="scientific">Homo sapiens</name>
    <name type="common">Human</name>
    <dbReference type="NCBI Taxonomy" id="9606"/>
</organismHost>
<accession>Q02261</accession>
<feature type="chain" id="PRO_0000133111" description="Replication protein E1">
    <location>
        <begin position="1"/>
        <end position="646"/>
    </location>
</feature>
<feature type="domain" description="SF3 helicase" evidence="1">
    <location>
        <begin position="449"/>
        <end position="599"/>
    </location>
</feature>
<feature type="region of interest" description="Disordered" evidence="2">
    <location>
        <begin position="145"/>
        <end position="185"/>
    </location>
</feature>
<feature type="region of interest" description="DNA-binding region" evidence="1">
    <location>
        <begin position="184"/>
        <end position="350"/>
    </location>
</feature>
<feature type="short sequence motif" description="Nuclear localization signal" evidence="1">
    <location>
        <begin position="83"/>
        <end position="85"/>
    </location>
</feature>
<feature type="short sequence motif" description="Nuclear export signal" evidence="1">
    <location>
        <begin position="106"/>
        <end position="115"/>
    </location>
</feature>
<feature type="compositionally biased region" description="Basic and acidic residues" evidence="2">
    <location>
        <begin position="163"/>
        <end position="185"/>
    </location>
</feature>
<feature type="binding site" evidence="1">
    <location>
        <begin position="475"/>
        <end position="482"/>
    </location>
    <ligand>
        <name>ATP</name>
        <dbReference type="ChEBI" id="CHEBI:30616"/>
    </ligand>
</feature>
<feature type="modified residue" description="Phosphoserine; by host" evidence="1">
    <location>
        <position position="89"/>
    </location>
</feature>
<feature type="modified residue" description="Phosphoserine; by host" evidence="1">
    <location>
        <position position="93"/>
    </location>
</feature>
<feature type="modified residue" description="Phosphoserine; by host" evidence="1">
    <location>
        <position position="107"/>
    </location>
</feature>
<feature type="cross-link" description="Glycyl lysine isopeptide (Lys-Gly) (interchain with G-Cter in SUMO)" evidence="1">
    <location>
        <position position="556"/>
    </location>
</feature>
<evidence type="ECO:0000255" key="1">
    <source>
        <dbReference type="HAMAP-Rule" id="MF_04000"/>
    </source>
</evidence>
<evidence type="ECO:0000256" key="2">
    <source>
        <dbReference type="SAM" id="MobiDB-lite"/>
    </source>
</evidence>
<gene>
    <name evidence="1" type="primary">E1</name>
</gene>
<proteinExistence type="inferred from homology"/>
<organism>
    <name type="scientific">Human papillomavirus 13</name>
    <dbReference type="NCBI Taxonomy" id="10573"/>
    <lineage>
        <taxon>Viruses</taxon>
        <taxon>Monodnaviria</taxon>
        <taxon>Shotokuvirae</taxon>
        <taxon>Cossaviricota</taxon>
        <taxon>Papovaviricetes</taxon>
        <taxon>Zurhausenvirales</taxon>
        <taxon>Papillomaviridae</taxon>
        <taxon>Firstpapillomavirinae</taxon>
        <taxon>Alphapapillomavirus</taxon>
        <taxon>Alphapapillomavirus 10</taxon>
    </lineage>
</organism>
<reference key="1">
    <citation type="journal article" date="1992" name="Virology">
        <title>Human papillomavirus type 13 and pygmy chimpanzee papillomavirus type 1: comparison of the genome organizations.</title>
        <authorList>
            <person name="van Ranst M."/>
            <person name="Fuse A."/>
            <person name="Fiten P."/>
            <person name="Beuken E."/>
            <person name="Pfister H."/>
            <person name="Burk R.D."/>
            <person name="Opdenakker G."/>
        </authorList>
    </citation>
    <scope>NUCLEOTIDE SEQUENCE [GENOMIC DNA]</scope>
</reference>
<comment type="function">
    <text evidence="1">ATP-dependent DNA 3'-5' helicase required for initiation of viral DNA replication. It forms a complex with the viral E2 protein. The E1-E2 complex binds to the replication origin which contains binding sites for both proteins. During the initial step, a dimer of E1 interacts with a dimer of protein E2 leading to a complex that binds the viral origin of replication with high specificity. Then, a second dimer of E1 displaces the E2 dimer in an ATP-dependent manner to form the E1 tetramer. Following this, two E1 monomers are added to each half of the site, which results in the formation of two E1 trimers on the viral ori. Subsequently, two hexamers will be created. The double hexamer acts as a bi-directional helicase machinery and unwinds the viral DNA and then recruits the host DNA polymerase to start replication.</text>
</comment>
<comment type="catalytic activity">
    <reaction evidence="1">
        <text>Couples ATP hydrolysis with the unwinding of duplex DNA by translocating in the 3'-5' direction.</text>
        <dbReference type="EC" id="5.6.2.4"/>
    </reaction>
</comment>
<comment type="catalytic activity">
    <reaction evidence="1">
        <text>ATP + H2O = ADP + phosphate + H(+)</text>
        <dbReference type="Rhea" id="RHEA:13065"/>
        <dbReference type="ChEBI" id="CHEBI:15377"/>
        <dbReference type="ChEBI" id="CHEBI:15378"/>
        <dbReference type="ChEBI" id="CHEBI:30616"/>
        <dbReference type="ChEBI" id="CHEBI:43474"/>
        <dbReference type="ChEBI" id="CHEBI:456216"/>
        <dbReference type="EC" id="5.6.2.4"/>
    </reaction>
</comment>
<comment type="subunit">
    <text evidence="1">Can form hexamers. Interacts with E2 protein; this interaction increases E1 DNA binding specificity. Interacts with host DNA polymerase subunit POLA2. Interacts with host single stranded DNA-binding protein RPA1. Interacts with host TOP1; this interaction stimulates the enzymatic activity of TOP1.</text>
</comment>
<comment type="subcellular location">
    <subcellularLocation>
        <location evidence="1">Host nucleus</location>
    </subcellularLocation>
</comment>
<comment type="PTM">
    <text evidence="1">Phosphorylated.</text>
</comment>
<comment type="PTM">
    <text evidence="1">Sumoylated.</text>
</comment>
<comment type="similarity">
    <text evidence="1">Belongs to the papillomaviridae E1 protein family.</text>
</comment>
<sequence>MAEDTGTNNEGTGCSGWFLVEAVVERTTGQQISDDEDETVEDSGLDMVDFIDDRPITHNSVEAQALLNEQEADAHYAAVQDLKRKYLGSPYVSPLGHVEQSVDCDISPRLDAIKLSRNSKKVKRRLFQSREITDSGYGYSEVEAETQVERNGEPENDCGGGGHGRDKEGEGQVHTEVHTGSQIEEHTGTTRVLELLKCKDVRATLYGKFKDCYGLSFTDLIRPFKSDKTTCGDWVVAAFGIHHSVSEAFEKLMQPLTTYMHIQWLTNAWGMVLLVLIRFKVNKSRCTVARTLATFLNIPEDHMLIEPPKIQSSVAALYWFRTGISNASIVTGETPEWIKRQTIVEHGLADNQFKLTEMVQWAYDNDFCDESEIAFEYAQRGDFDSNARAFLNSNCQAKYVKDCATMCKHYKNAEMKKMSMKQWITYRSKKIEEAGNWKPIVQFLRHQNIEFIPFLSKLKLWLHGTPKKNCIAIVGPPDTGKSCFCMSLIKFLGGTVISYVNSSSHFWLQPLCNAKVALLDDATQSCWVYMDTYMRNLLDGNPMSIDRKHKSLALIKCPPLLVTSNVDITKDDKYKYLYSRVTTLTFPNPFPFDRNGNAVYELSDANWKCFFTRLSASLDIQDSEDEDDGDNSQAFRCVPGTVVRTV</sequence>